<organism>
    <name type="scientific">Delia radicum</name>
    <name type="common">Cabbage root fly</name>
    <name type="synonym">Anthomyia brassicae</name>
    <dbReference type="NCBI Taxonomy" id="30064"/>
    <lineage>
        <taxon>Eukaryota</taxon>
        <taxon>Metazoa</taxon>
        <taxon>Ecdysozoa</taxon>
        <taxon>Arthropoda</taxon>
        <taxon>Hexapoda</taxon>
        <taxon>Insecta</taxon>
        <taxon>Pterygota</taxon>
        <taxon>Neoptera</taxon>
        <taxon>Endopterygota</taxon>
        <taxon>Diptera</taxon>
        <taxon>Brachycera</taxon>
        <taxon>Muscomorpha</taxon>
        <taxon>Muscoidea</taxon>
        <taxon>Anthomyiidae</taxon>
        <taxon>Anthomyiinae</taxon>
        <taxon>Delia</taxon>
    </lineage>
</organism>
<proteinExistence type="evidence at protein level"/>
<sequence length="7" mass="900">GQDFMRF</sequence>
<dbReference type="GO" id="GO:0005576">
    <property type="term" value="C:extracellular region"/>
    <property type="evidence" value="ECO:0007669"/>
    <property type="project" value="UniProtKB-SubCell"/>
</dbReference>
<dbReference type="GO" id="GO:0007218">
    <property type="term" value="P:neuropeptide signaling pathway"/>
    <property type="evidence" value="ECO:0007669"/>
    <property type="project" value="UniProtKB-KW"/>
</dbReference>
<comment type="function">
    <text evidence="1">FMRFamides and FMRFamide-like peptides are neuropeptides.</text>
</comment>
<comment type="subcellular location">
    <subcellularLocation>
        <location evidence="2">Secreted</location>
    </subcellularLocation>
</comment>
<comment type="tissue specificity">
    <text evidence="4">Expressed in the CNS but not in the ring gland, midgut, thoracic perisymapthetic organs (tPSO) or abdominal perisymapthetic organs (aPSO) (at protein level).</text>
</comment>
<comment type="developmental stage">
    <text evidence="4">Detected in larvae.</text>
</comment>
<comment type="mass spectrometry" mass="899.42" method="MALDI" evidence="4"/>
<comment type="similarity">
    <text evidence="3">Belongs to the FARP (FMRFamide related peptide) family.</text>
</comment>
<reference evidence="6" key="1">
    <citation type="journal article" date="2012" name="PLoS ONE">
        <title>Peptidomics of the agriculturally damaging larval stage of the cabbage root fly Delia radicum (Diptera: Anthomyiidae).</title>
        <authorList>
            <person name="Zoephel J."/>
            <person name="Reiher W."/>
            <person name="Rexer K.-H."/>
            <person name="Kahnt J."/>
            <person name="Wegener C."/>
        </authorList>
    </citation>
    <scope>PROTEIN SEQUENCE</scope>
    <scope>TISSUE SPECIFICITY</scope>
    <scope>DEVELOPMENTAL STAGE</scope>
    <scope>MASS SPECTROMETRY</scope>
    <scope>AMIDATION AT PHE-7</scope>
    <source>
        <tissue evidence="4">CNS</tissue>
    </source>
</reference>
<keyword id="KW-0027">Amidation</keyword>
<keyword id="KW-0903">Direct protein sequencing</keyword>
<keyword id="KW-0527">Neuropeptide</keyword>
<keyword id="KW-0964">Secreted</keyword>
<name>FAR2_DELRA</name>
<accession>B3EWJ8</accession>
<protein>
    <recommendedName>
        <fullName evidence="5">FMRFamide-like neuropeptide GQDFMRF-amide</fullName>
    </recommendedName>
</protein>
<evidence type="ECO:0000250" key="1">
    <source>
        <dbReference type="UniProtKB" id="P41855"/>
    </source>
</evidence>
<evidence type="ECO:0000250" key="2">
    <source>
        <dbReference type="UniProtKB" id="P85455"/>
    </source>
</evidence>
<evidence type="ECO:0000255" key="3"/>
<evidence type="ECO:0000269" key="4">
    <source>
    </source>
</evidence>
<evidence type="ECO:0000303" key="5">
    <source>
    </source>
</evidence>
<evidence type="ECO:0000305" key="6"/>
<feature type="peptide" id="PRO_0000419702" description="FMRFamide-like neuropeptide GQDFMRF-amide" evidence="4">
    <location>
        <begin position="1"/>
        <end position="7"/>
    </location>
</feature>
<feature type="modified residue" description="Phenylalanine amide" evidence="4">
    <location>
        <position position="7"/>
    </location>
</feature>